<name>FM25G_HUMAN</name>
<sequence>MLGGLGKLAAEGLAHRTEKATEGAIHAVEEVVKEVVGHAKETGEKAIAEAIKKAQESGDKKMKEITETVTNTVTNAITHAAESLDKLGQ</sequence>
<feature type="chain" id="PRO_0000416048" description="Protein FAM25G">
    <location>
        <begin position="1"/>
        <end position="89"/>
    </location>
</feature>
<evidence type="ECO:0000305" key="1"/>
<evidence type="ECO:0000312" key="2">
    <source>
        <dbReference type="HGNC" id="HGNC:23590"/>
    </source>
</evidence>
<protein>
    <recommendedName>
        <fullName evidence="1">Protein FAM25G</fullName>
    </recommendedName>
</protein>
<comment type="similarity">
    <text evidence="1">Belongs to the FAM25 family.</text>
</comment>
<proteinExistence type="inferred from homology"/>
<dbReference type="EMBL" id="AL591684">
    <property type="status" value="NOT_ANNOTATED_CDS"/>
    <property type="molecule type" value="Genomic_DNA"/>
</dbReference>
<dbReference type="CCDS" id="CCDS73124.1"/>
<dbReference type="RefSeq" id="NP_001131021.1">
    <property type="nucleotide sequence ID" value="NM_001137549.2"/>
</dbReference>
<dbReference type="SMR" id="B3EWG6"/>
<dbReference type="BioGRID" id="135986">
    <property type="interactions" value="21"/>
</dbReference>
<dbReference type="BioGRID" id="568554">
    <property type="interactions" value="18"/>
</dbReference>
<dbReference type="BioGRID" id="569275">
    <property type="interactions" value="25"/>
</dbReference>
<dbReference type="FunCoup" id="B3EWG6">
    <property type="interactions" value="2"/>
</dbReference>
<dbReference type="BioMuta" id="FAM25G"/>
<dbReference type="jPOST" id="B3EWG6"/>
<dbReference type="MassIVE" id="B3EWG6"/>
<dbReference type="PRIDE" id="B3EWG6"/>
<dbReference type="Pumba" id="B3EWG6"/>
<dbReference type="Antibodypedia" id="76826">
    <property type="antibodies" value="7 antibodies from 4 providers"/>
</dbReference>
<dbReference type="DNASU" id="644054"/>
<dbReference type="Ensembl" id="ENST00000452267.2">
    <property type="protein sequence ID" value="ENSP00000413896.2"/>
    <property type="gene ID" value="ENSG00000189090.8"/>
</dbReference>
<dbReference type="GeneID" id="100133093"/>
<dbReference type="KEGG" id="hsa:100133093"/>
<dbReference type="KEGG" id="hsa:643161"/>
<dbReference type="KEGG" id="hsa:644054"/>
<dbReference type="MANE-Select" id="ENST00000452267.2">
    <property type="protein sequence ID" value="ENSP00000413896.2"/>
    <property type="RefSeq nucleotide sequence ID" value="NM_001137549.2"/>
    <property type="RefSeq protein sequence ID" value="NP_001131021.1"/>
</dbReference>
<dbReference type="UCSC" id="uc010qge.4">
    <property type="organism name" value="human"/>
</dbReference>
<dbReference type="AGR" id="HGNC:23436"/>
<dbReference type="AGR" id="HGNC:23586"/>
<dbReference type="AGR" id="HGNC:23590"/>
<dbReference type="CTD" id="100133093"/>
<dbReference type="CTD" id="643161"/>
<dbReference type="CTD" id="644054"/>
<dbReference type="GeneCards" id="FAM25G"/>
<dbReference type="HGNC" id="HGNC:23590">
    <property type="gene designation" value="FAM25G"/>
</dbReference>
<dbReference type="HPA" id="ENSG00000189090">
    <property type="expression patterns" value="Tissue enhanced (esophagus, skin)"/>
</dbReference>
<dbReference type="neXtProt" id="NX_B3EWG6"/>
<dbReference type="OpenTargets" id="ENSG00000188100"/>
<dbReference type="OpenTargets" id="ENSG00000276430"/>
<dbReference type="VEuPathDB" id="HostDB:ENSG00000189090"/>
<dbReference type="GeneTree" id="ENSGT00390000000786"/>
<dbReference type="HOGENOM" id="CLU_2454157_0_0_1"/>
<dbReference type="InParanoid" id="B3EWG6"/>
<dbReference type="OMA" id="TNTIMHA"/>
<dbReference type="PAN-GO" id="B3EWG6">
    <property type="GO annotations" value="0 GO annotations based on evolutionary models"/>
</dbReference>
<dbReference type="PhylomeDB" id="B3EWG6"/>
<dbReference type="PathwayCommons" id="B3EWG6"/>
<dbReference type="BioGRID-ORCS" id="100133093">
    <property type="hits" value="365 hits in 652 CRISPR screens"/>
</dbReference>
<dbReference type="BioGRID-ORCS" id="643161">
    <property type="hits" value="134 hits in 1045 CRISPR screens"/>
</dbReference>
<dbReference type="BioGRID-ORCS" id="644054">
    <property type="hits" value="23 hits in 306 CRISPR screens"/>
</dbReference>
<dbReference type="Pharos" id="B3EWG6">
    <property type="development level" value="Tdark"/>
</dbReference>
<dbReference type="PRO" id="PR:B3EWG6"/>
<dbReference type="Proteomes" id="UP000005640">
    <property type="component" value="Chromosome 10"/>
</dbReference>
<dbReference type="RNAct" id="B3EWG6">
    <property type="molecule type" value="protein"/>
</dbReference>
<dbReference type="Bgee" id="ENSG00000189090">
    <property type="expression patterns" value="Expressed in male germ line stem cell (sensu Vertebrata) in testis and 81 other cell types or tissues"/>
</dbReference>
<dbReference type="InterPro" id="IPR023243">
    <property type="entry name" value="FAM25"/>
</dbReference>
<dbReference type="PANTHER" id="PTHR34994">
    <property type="entry name" value="PROTEIN FAM25A-RELATED"/>
    <property type="match status" value="1"/>
</dbReference>
<dbReference type="PANTHER" id="PTHR34994:SF1">
    <property type="entry name" value="PROTEIN FAM25A-RELATED"/>
    <property type="match status" value="1"/>
</dbReference>
<dbReference type="Pfam" id="PF15825">
    <property type="entry name" value="FAM25"/>
    <property type="match status" value="1"/>
</dbReference>
<dbReference type="PRINTS" id="PR02048">
    <property type="entry name" value="PROTEINF25"/>
</dbReference>
<organism>
    <name type="scientific">Homo sapiens</name>
    <name type="common">Human</name>
    <dbReference type="NCBI Taxonomy" id="9606"/>
    <lineage>
        <taxon>Eukaryota</taxon>
        <taxon>Metazoa</taxon>
        <taxon>Chordata</taxon>
        <taxon>Craniata</taxon>
        <taxon>Vertebrata</taxon>
        <taxon>Euteleostomi</taxon>
        <taxon>Mammalia</taxon>
        <taxon>Eutheria</taxon>
        <taxon>Euarchontoglires</taxon>
        <taxon>Primates</taxon>
        <taxon>Haplorrhini</taxon>
        <taxon>Catarrhini</taxon>
        <taxon>Hominidae</taxon>
        <taxon>Homo</taxon>
    </lineage>
</organism>
<reference key="1">
    <citation type="journal article" date="2004" name="Nature">
        <title>The DNA sequence and comparative analysis of human chromosome 10.</title>
        <authorList>
            <person name="Deloukas P."/>
            <person name="Earthrowl M.E."/>
            <person name="Grafham D.V."/>
            <person name="Rubenfield M."/>
            <person name="French L."/>
            <person name="Steward C.A."/>
            <person name="Sims S.K."/>
            <person name="Jones M.C."/>
            <person name="Searle S."/>
            <person name="Scott C."/>
            <person name="Howe K."/>
            <person name="Hunt S.E."/>
            <person name="Andrews T.D."/>
            <person name="Gilbert J.G.R."/>
            <person name="Swarbreck D."/>
            <person name="Ashurst J.L."/>
            <person name="Taylor A."/>
            <person name="Battles J."/>
            <person name="Bird C.P."/>
            <person name="Ainscough R."/>
            <person name="Almeida J.P."/>
            <person name="Ashwell R.I.S."/>
            <person name="Ambrose K.D."/>
            <person name="Babbage A.K."/>
            <person name="Bagguley C.L."/>
            <person name="Bailey J."/>
            <person name="Banerjee R."/>
            <person name="Bates K."/>
            <person name="Beasley H."/>
            <person name="Bray-Allen S."/>
            <person name="Brown A.J."/>
            <person name="Brown J.Y."/>
            <person name="Burford D.C."/>
            <person name="Burrill W."/>
            <person name="Burton J."/>
            <person name="Cahill P."/>
            <person name="Camire D."/>
            <person name="Carter N.P."/>
            <person name="Chapman J.C."/>
            <person name="Clark S.Y."/>
            <person name="Clarke G."/>
            <person name="Clee C.M."/>
            <person name="Clegg S."/>
            <person name="Corby N."/>
            <person name="Coulson A."/>
            <person name="Dhami P."/>
            <person name="Dutta I."/>
            <person name="Dunn M."/>
            <person name="Faulkner L."/>
            <person name="Frankish A."/>
            <person name="Frankland J.A."/>
            <person name="Garner P."/>
            <person name="Garnett J."/>
            <person name="Gribble S."/>
            <person name="Griffiths C."/>
            <person name="Grocock R."/>
            <person name="Gustafson E."/>
            <person name="Hammond S."/>
            <person name="Harley J.L."/>
            <person name="Hart E."/>
            <person name="Heath P.D."/>
            <person name="Ho T.P."/>
            <person name="Hopkins B."/>
            <person name="Horne J."/>
            <person name="Howden P.J."/>
            <person name="Huckle E."/>
            <person name="Hynds C."/>
            <person name="Johnson C."/>
            <person name="Johnson D."/>
            <person name="Kana A."/>
            <person name="Kay M."/>
            <person name="Kimberley A.M."/>
            <person name="Kershaw J.K."/>
            <person name="Kokkinaki M."/>
            <person name="Laird G.K."/>
            <person name="Lawlor S."/>
            <person name="Lee H.M."/>
            <person name="Leongamornlert D.A."/>
            <person name="Laird G."/>
            <person name="Lloyd C."/>
            <person name="Lloyd D.M."/>
            <person name="Loveland J."/>
            <person name="Lovell J."/>
            <person name="McLaren S."/>
            <person name="McLay K.E."/>
            <person name="McMurray A."/>
            <person name="Mashreghi-Mohammadi M."/>
            <person name="Matthews L."/>
            <person name="Milne S."/>
            <person name="Nickerson T."/>
            <person name="Nguyen M."/>
            <person name="Overton-Larty E."/>
            <person name="Palmer S.A."/>
            <person name="Pearce A.V."/>
            <person name="Peck A.I."/>
            <person name="Pelan S."/>
            <person name="Phillimore B."/>
            <person name="Porter K."/>
            <person name="Rice C.M."/>
            <person name="Rogosin A."/>
            <person name="Ross M.T."/>
            <person name="Sarafidou T."/>
            <person name="Sehra H.K."/>
            <person name="Shownkeen R."/>
            <person name="Skuce C.D."/>
            <person name="Smith M."/>
            <person name="Standring L."/>
            <person name="Sycamore N."/>
            <person name="Tester J."/>
            <person name="Thorpe A."/>
            <person name="Torcasso W."/>
            <person name="Tracey A."/>
            <person name="Tromans A."/>
            <person name="Tsolas J."/>
            <person name="Wall M."/>
            <person name="Walsh J."/>
            <person name="Wang H."/>
            <person name="Weinstock K."/>
            <person name="West A.P."/>
            <person name="Willey D.L."/>
            <person name="Whitehead S.L."/>
            <person name="Wilming L."/>
            <person name="Wray P.W."/>
            <person name="Young L."/>
            <person name="Chen Y."/>
            <person name="Lovering R.C."/>
            <person name="Moschonas N.K."/>
            <person name="Siebert R."/>
            <person name="Fechtel K."/>
            <person name="Bentley D."/>
            <person name="Durbin R.M."/>
            <person name="Hubbard T."/>
            <person name="Doucette-Stamm L."/>
            <person name="Beck S."/>
            <person name="Smith D.R."/>
            <person name="Rogers J."/>
        </authorList>
    </citation>
    <scope>NUCLEOTIDE SEQUENCE [LARGE SCALE GENOMIC DNA]</scope>
</reference>
<accession>B3EWG6</accession>
<accession>B2RV02</accession>
<accession>Q5VTM1</accession>
<keyword id="KW-1185">Reference proteome</keyword>
<gene>
    <name evidence="2" type="primary">FAM25G</name>
</gene>